<gene>
    <name evidence="13" type="primary">Perp</name>
    <name evidence="13" type="synonym">Krtcap1</name>
</gene>
<sequence>MLRCGLACERCRWILPLLLLSAIAFDIIALAGRGWLQSSNHIQTSSLWWRCFDEGGGSGSYDDGCQSLMEYAWGRAAAATLFCGFIILCICFILSFFALCGPQMLVFLRVIGGLLALAAIFQIISLVIYPVKYTQTFRLHDNPAVNYIYNWAYGFGWAATIILIGCSFFFCCLPNYEDDLLGAAKPRYFYPPA</sequence>
<feature type="chain" id="PRO_0000226995" description="p53 apoptosis effector related to PMP-22">
    <location>
        <begin position="1"/>
        <end position="193"/>
    </location>
</feature>
<feature type="transmembrane region" description="Helical" evidence="3">
    <location>
        <begin position="12"/>
        <end position="32"/>
    </location>
</feature>
<feature type="transmembrane region" description="Helical" evidence="3">
    <location>
        <begin position="81"/>
        <end position="101"/>
    </location>
</feature>
<feature type="transmembrane region" description="Helical" evidence="3">
    <location>
        <begin position="110"/>
        <end position="130"/>
    </location>
</feature>
<feature type="transmembrane region" description="Helical" evidence="3">
    <location>
        <begin position="151"/>
        <end position="171"/>
    </location>
</feature>
<keyword id="KW-0053">Apoptosis</keyword>
<keyword id="KW-0130">Cell adhesion</keyword>
<keyword id="KW-0965">Cell junction</keyword>
<keyword id="KW-1003">Cell membrane</keyword>
<keyword id="KW-0963">Cytoplasm</keyword>
<keyword id="KW-0472">Membrane</keyword>
<keyword id="KW-1185">Reference proteome</keyword>
<keyword id="KW-0812">Transmembrane</keyword>
<keyword id="KW-1133">Transmembrane helix</keyword>
<reference key="1">
    <citation type="journal article" date="2000" name="Genes Dev.">
        <title>PERP, an apoptosis-associated target of p53, is a novel member of the PMP-22/gas3 family.</title>
        <authorList>
            <person name="Attardi L.D."/>
            <person name="Reczek E.E."/>
            <person name="Cosmas C."/>
            <person name="Demicco E.G."/>
            <person name="McCurrach M.E."/>
            <person name="Lowe S.W."/>
            <person name="Jacks T."/>
        </authorList>
    </citation>
    <scope>NUCLEOTIDE SEQUENCE [MRNA]</scope>
    <scope>NUCLEOTIDE SEQUENCE [GENOMIC DNA] OF 1-71</scope>
    <scope>FUNCTION</scope>
    <scope>SUBCELLULAR LOCATION</scope>
    <scope>TISSUE SPECIFICITY</scope>
    <scope>INDUCTION</scope>
</reference>
<reference key="2">
    <citation type="journal article" date="2005" name="Science">
        <title>The transcriptional landscape of the mammalian genome.</title>
        <authorList>
            <person name="Carninci P."/>
            <person name="Kasukawa T."/>
            <person name="Katayama S."/>
            <person name="Gough J."/>
            <person name="Frith M.C."/>
            <person name="Maeda N."/>
            <person name="Oyama R."/>
            <person name="Ravasi T."/>
            <person name="Lenhard B."/>
            <person name="Wells C."/>
            <person name="Kodzius R."/>
            <person name="Shimokawa K."/>
            <person name="Bajic V.B."/>
            <person name="Brenner S.E."/>
            <person name="Batalov S."/>
            <person name="Forrest A.R."/>
            <person name="Zavolan M."/>
            <person name="Davis M.J."/>
            <person name="Wilming L.G."/>
            <person name="Aidinis V."/>
            <person name="Allen J.E."/>
            <person name="Ambesi-Impiombato A."/>
            <person name="Apweiler R."/>
            <person name="Aturaliya R.N."/>
            <person name="Bailey T.L."/>
            <person name="Bansal M."/>
            <person name="Baxter L."/>
            <person name="Beisel K.W."/>
            <person name="Bersano T."/>
            <person name="Bono H."/>
            <person name="Chalk A.M."/>
            <person name="Chiu K.P."/>
            <person name="Choudhary V."/>
            <person name="Christoffels A."/>
            <person name="Clutterbuck D.R."/>
            <person name="Crowe M.L."/>
            <person name="Dalla E."/>
            <person name="Dalrymple B.P."/>
            <person name="de Bono B."/>
            <person name="Della Gatta G."/>
            <person name="di Bernardo D."/>
            <person name="Down T."/>
            <person name="Engstrom P."/>
            <person name="Fagiolini M."/>
            <person name="Faulkner G."/>
            <person name="Fletcher C.F."/>
            <person name="Fukushima T."/>
            <person name="Furuno M."/>
            <person name="Futaki S."/>
            <person name="Gariboldi M."/>
            <person name="Georgii-Hemming P."/>
            <person name="Gingeras T.R."/>
            <person name="Gojobori T."/>
            <person name="Green R.E."/>
            <person name="Gustincich S."/>
            <person name="Harbers M."/>
            <person name="Hayashi Y."/>
            <person name="Hensch T.K."/>
            <person name="Hirokawa N."/>
            <person name="Hill D."/>
            <person name="Huminiecki L."/>
            <person name="Iacono M."/>
            <person name="Ikeo K."/>
            <person name="Iwama A."/>
            <person name="Ishikawa T."/>
            <person name="Jakt M."/>
            <person name="Kanapin A."/>
            <person name="Katoh M."/>
            <person name="Kawasawa Y."/>
            <person name="Kelso J."/>
            <person name="Kitamura H."/>
            <person name="Kitano H."/>
            <person name="Kollias G."/>
            <person name="Krishnan S.P."/>
            <person name="Kruger A."/>
            <person name="Kummerfeld S.K."/>
            <person name="Kurochkin I.V."/>
            <person name="Lareau L.F."/>
            <person name="Lazarevic D."/>
            <person name="Lipovich L."/>
            <person name="Liu J."/>
            <person name="Liuni S."/>
            <person name="McWilliam S."/>
            <person name="Madan Babu M."/>
            <person name="Madera M."/>
            <person name="Marchionni L."/>
            <person name="Matsuda H."/>
            <person name="Matsuzawa S."/>
            <person name="Miki H."/>
            <person name="Mignone F."/>
            <person name="Miyake S."/>
            <person name="Morris K."/>
            <person name="Mottagui-Tabar S."/>
            <person name="Mulder N."/>
            <person name="Nakano N."/>
            <person name="Nakauchi H."/>
            <person name="Ng P."/>
            <person name="Nilsson R."/>
            <person name="Nishiguchi S."/>
            <person name="Nishikawa S."/>
            <person name="Nori F."/>
            <person name="Ohara O."/>
            <person name="Okazaki Y."/>
            <person name="Orlando V."/>
            <person name="Pang K.C."/>
            <person name="Pavan W.J."/>
            <person name="Pavesi G."/>
            <person name="Pesole G."/>
            <person name="Petrovsky N."/>
            <person name="Piazza S."/>
            <person name="Reed J."/>
            <person name="Reid J.F."/>
            <person name="Ring B.Z."/>
            <person name="Ringwald M."/>
            <person name="Rost B."/>
            <person name="Ruan Y."/>
            <person name="Salzberg S.L."/>
            <person name="Sandelin A."/>
            <person name="Schneider C."/>
            <person name="Schoenbach C."/>
            <person name="Sekiguchi K."/>
            <person name="Semple C.A."/>
            <person name="Seno S."/>
            <person name="Sessa L."/>
            <person name="Sheng Y."/>
            <person name="Shibata Y."/>
            <person name="Shimada H."/>
            <person name="Shimada K."/>
            <person name="Silva D."/>
            <person name="Sinclair B."/>
            <person name="Sperling S."/>
            <person name="Stupka E."/>
            <person name="Sugiura K."/>
            <person name="Sultana R."/>
            <person name="Takenaka Y."/>
            <person name="Taki K."/>
            <person name="Tammoja K."/>
            <person name="Tan S.L."/>
            <person name="Tang S."/>
            <person name="Taylor M.S."/>
            <person name="Tegner J."/>
            <person name="Teichmann S.A."/>
            <person name="Ueda H.R."/>
            <person name="van Nimwegen E."/>
            <person name="Verardo R."/>
            <person name="Wei C.L."/>
            <person name="Yagi K."/>
            <person name="Yamanishi H."/>
            <person name="Zabarovsky E."/>
            <person name="Zhu S."/>
            <person name="Zimmer A."/>
            <person name="Hide W."/>
            <person name="Bult C."/>
            <person name="Grimmond S.M."/>
            <person name="Teasdale R.D."/>
            <person name="Liu E.T."/>
            <person name="Brusic V."/>
            <person name="Quackenbush J."/>
            <person name="Wahlestedt C."/>
            <person name="Mattick J.S."/>
            <person name="Hume D.A."/>
            <person name="Kai C."/>
            <person name="Sasaki D."/>
            <person name="Tomaru Y."/>
            <person name="Fukuda S."/>
            <person name="Kanamori-Katayama M."/>
            <person name="Suzuki M."/>
            <person name="Aoki J."/>
            <person name="Arakawa T."/>
            <person name="Iida J."/>
            <person name="Imamura K."/>
            <person name="Itoh M."/>
            <person name="Kato T."/>
            <person name="Kawaji H."/>
            <person name="Kawagashira N."/>
            <person name="Kawashima T."/>
            <person name="Kojima M."/>
            <person name="Kondo S."/>
            <person name="Konno H."/>
            <person name="Nakano K."/>
            <person name="Ninomiya N."/>
            <person name="Nishio T."/>
            <person name="Okada M."/>
            <person name="Plessy C."/>
            <person name="Shibata K."/>
            <person name="Shiraki T."/>
            <person name="Suzuki S."/>
            <person name="Tagami M."/>
            <person name="Waki K."/>
            <person name="Watahiki A."/>
            <person name="Okamura-Oho Y."/>
            <person name="Suzuki H."/>
            <person name="Kawai J."/>
            <person name="Hayashizaki Y."/>
        </authorList>
    </citation>
    <scope>NUCLEOTIDE SEQUENCE [LARGE SCALE MRNA]</scope>
    <source>
        <strain>C57BL/6J</strain>
        <tissue>Embryo</tissue>
        <tissue>Tongue</tissue>
    </source>
</reference>
<reference key="3">
    <citation type="journal article" date="2004" name="Genome Res.">
        <title>The status, quality, and expansion of the NIH full-length cDNA project: the Mammalian Gene Collection (MGC).</title>
        <authorList>
            <consortium name="The MGC Project Team"/>
        </authorList>
    </citation>
    <scope>NUCLEOTIDE SEQUENCE [LARGE SCALE MRNA]</scope>
    <source>
        <strain>C57BL/6J</strain>
        <strain>FVB/N</strain>
        <tissue>Mammary tumor</tissue>
    </source>
</reference>
<reference key="4">
    <citation type="journal article" date="2005" name="Cell">
        <title>Perp is a p63-regulated gene essential for epithelial integrity.</title>
        <authorList>
            <person name="Ihrie R.A."/>
            <person name="Marques M.R."/>
            <person name="Nguyen B.T."/>
            <person name="Horner J.S."/>
            <person name="Papazoglu C."/>
            <person name="Bronson R.T."/>
            <person name="Mills A.A."/>
            <person name="Attardi L.D."/>
        </authorList>
    </citation>
    <scope>FUNCTION</scope>
    <scope>TISSUE SPECIFICITY</scope>
    <scope>SUBCELLULAR LOCATION</scope>
    <scope>DEVELOPMENTAL STAGE</scope>
    <scope>DISRUPTION PHENOTYPE</scope>
</reference>
<reference key="5">
    <citation type="journal article" date="2006" name="Cell Death Differ.">
        <title>Adult mice lacking the p53/p63 target gene Perp are not predisposed to spontaneous tumorigenesis but display features of ectodermal dysplasia syndromes.</title>
        <authorList>
            <person name="Ihrie R.A."/>
            <person name="Bronson R.T."/>
            <person name="Attardi L.D."/>
        </authorList>
    </citation>
    <scope>FUNCTION</scope>
    <scope>DISRUPTION PHENOTYPE</scope>
</reference>
<reference key="6">
    <citation type="journal article" date="2010" name="Cell">
        <title>A tissue-specific atlas of mouse protein phosphorylation and expression.</title>
        <authorList>
            <person name="Huttlin E.L."/>
            <person name="Jedrychowski M.P."/>
            <person name="Elias J.E."/>
            <person name="Goswami T."/>
            <person name="Rad R."/>
            <person name="Beausoleil S.A."/>
            <person name="Villen J."/>
            <person name="Haas W."/>
            <person name="Sowa M.E."/>
            <person name="Gygi S.P."/>
        </authorList>
    </citation>
    <scope>IDENTIFICATION BY MASS SPECTROMETRY [LARGE SCALE ANALYSIS]</scope>
    <source>
        <tissue>Heart</tissue>
    </source>
</reference>
<reference key="7">
    <citation type="journal article" date="2011" name="J. Cell Sci.">
        <title>PERP regulates enamel formation via effects on cell-cell adhesion and gene expression.</title>
        <authorList>
            <person name="Jheon A.H."/>
            <person name="Mostowfi P."/>
            <person name="Snead M.L."/>
            <person name="Ihrie R.A."/>
            <person name="Sone E."/>
            <person name="Pramparo T."/>
            <person name="Attardi L.D."/>
            <person name="Klein O.D."/>
        </authorList>
    </citation>
    <scope>FUNCTION</scope>
    <scope>SUBCELLULAR LOCATION</scope>
    <scope>TISSUE SPECIFICITY</scope>
    <scope>DEVELOPMENTAL STAGE</scope>
    <scope>DISRUPTION PHENOTYPE</scope>
</reference>
<reference key="8">
    <citation type="journal article" date="2012" name="Breast Cancer Res.">
        <title>Deficiency of the p53/p63 target Perp alters mammary gland homeostasis and promotes cancer.</title>
        <authorList>
            <person name="Dusek R.L."/>
            <person name="Bascom J.L."/>
            <person name="Vogel H."/>
            <person name="Baron S."/>
            <person name="Borowsky A.D."/>
            <person name="Bissell M.J."/>
            <person name="Attardi L.D."/>
        </authorList>
    </citation>
    <scope>FUNCTION</scope>
    <scope>SUBCELLULAR LOCATION</scope>
    <scope>TISSUE SPECIFICITY</scope>
    <scope>DISRUPTION PHENOTYPE</scope>
</reference>
<reference key="9">
    <citation type="journal article" date="2015" name="Cell. Microbiol.">
        <title>PERP, a host tetraspanning membrane protein, is required for Salmonella-induced inflammation.</title>
        <authorList>
            <person name="Hallstrom K.N."/>
            <person name="Srikanth C.V."/>
            <person name="Agbor T.A."/>
            <person name="Dumont C.M."/>
            <person name="Peters K.N."/>
            <person name="Paraoan L."/>
            <person name="Casanova J.E."/>
            <person name="Boll E.J."/>
            <person name="McCormick B.A."/>
        </authorList>
    </citation>
    <scope>SUBCELLULAR LOCATION</scope>
    <scope>TISSUE SPECIFICITY</scope>
</reference>
<reference key="10">
    <citation type="journal article" date="2017" name="Arterioscler. Thromb. Vasc. Biol.">
        <title>Zebrafish Model for Functional Screening of Flow-Responsive Genes.</title>
        <authorList>
            <person name="Serbanovic-Canic J."/>
            <person name="de Luca A."/>
            <person name="Warboys C."/>
            <person name="Ferreira P.F."/>
            <person name="Luong L.A."/>
            <person name="Hsiao S."/>
            <person name="Gauci I."/>
            <person name="Mahmoud M."/>
            <person name="Feng S."/>
            <person name="Souilhol C."/>
            <person name="Bowden N."/>
            <person name="Ashton J.P."/>
            <person name="Walczak H."/>
            <person name="Firmin D."/>
            <person name="Krams R."/>
            <person name="Mason J.C."/>
            <person name="Haskard D.O."/>
            <person name="Sherwin S."/>
            <person name="Ridger V."/>
            <person name="Chico T.J."/>
            <person name="Evans P.C."/>
        </authorList>
    </citation>
    <scope>SUBCELLULAR LOCATION</scope>
    <scope>TISSUE SPECIFICITY</scope>
</reference>
<reference key="11">
    <citation type="journal article" date="2018" name="Front. Immunol.">
        <title>Loss of Perp in T Cells Promotes Resistance to Apoptosis of T Helper 17 Cells and Exacerbates the Development of Experimental Autoimmune Encephalomyelitis in Mice.</title>
        <authorList>
            <person name="Zhou Y."/>
            <person name="Leng X."/>
            <person name="He Y."/>
            <person name="Li Y."/>
            <person name="Liu Y."/>
            <person name="Liu Y."/>
            <person name="Zou Q."/>
            <person name="Shi G."/>
            <person name="Wang Y."/>
        </authorList>
    </citation>
    <scope>FUNCTION</scope>
</reference>
<organism>
    <name type="scientific">Mus musculus</name>
    <name type="common">Mouse</name>
    <dbReference type="NCBI Taxonomy" id="10090"/>
    <lineage>
        <taxon>Eukaryota</taxon>
        <taxon>Metazoa</taxon>
        <taxon>Chordata</taxon>
        <taxon>Craniata</taxon>
        <taxon>Vertebrata</taxon>
        <taxon>Euteleostomi</taxon>
        <taxon>Mammalia</taxon>
        <taxon>Eutheria</taxon>
        <taxon>Euarchontoglires</taxon>
        <taxon>Glires</taxon>
        <taxon>Rodentia</taxon>
        <taxon>Myomorpha</taxon>
        <taxon>Muroidea</taxon>
        <taxon>Muridae</taxon>
        <taxon>Murinae</taxon>
        <taxon>Mus</taxon>
        <taxon>Mus</taxon>
    </lineage>
</organism>
<dbReference type="EMBL" id="AF249870">
    <property type="protein sequence ID" value="AAF64306.1"/>
    <property type="molecule type" value="mRNA"/>
</dbReference>
<dbReference type="EMBL" id="AF251009">
    <property type="protein sequence ID" value="AAF70261.1"/>
    <property type="molecule type" value="Genomic_DNA"/>
</dbReference>
<dbReference type="EMBL" id="AK003734">
    <property type="protein sequence ID" value="BAB22968.1"/>
    <property type="molecule type" value="mRNA"/>
</dbReference>
<dbReference type="EMBL" id="AK009184">
    <property type="protein sequence ID" value="BAB26126.1"/>
    <property type="molecule type" value="mRNA"/>
</dbReference>
<dbReference type="EMBL" id="AK009190">
    <property type="protein sequence ID" value="BAB26130.1"/>
    <property type="molecule type" value="mRNA"/>
</dbReference>
<dbReference type="EMBL" id="BC021772">
    <property type="protein sequence ID" value="AAH21772.1"/>
    <property type="molecule type" value="mRNA"/>
</dbReference>
<dbReference type="CCDS" id="CCDS23714.1"/>
<dbReference type="RefSeq" id="NP_071315.1">
    <property type="nucleotide sequence ID" value="NM_022032.4"/>
</dbReference>
<dbReference type="SMR" id="Q9JK95"/>
<dbReference type="FunCoup" id="Q9JK95">
    <property type="interactions" value="392"/>
</dbReference>
<dbReference type="STRING" id="10090.ENSMUSP00000019998"/>
<dbReference type="PhosphoSitePlus" id="Q9JK95"/>
<dbReference type="PaxDb" id="10090-ENSMUSP00000019998"/>
<dbReference type="ProteomicsDB" id="288035"/>
<dbReference type="Antibodypedia" id="19785">
    <property type="antibodies" value="229 antibodies from 34 providers"/>
</dbReference>
<dbReference type="DNASU" id="64058"/>
<dbReference type="Ensembl" id="ENSMUST00000019998.9">
    <property type="protein sequence ID" value="ENSMUSP00000019998.8"/>
    <property type="gene ID" value="ENSMUSG00000019851.9"/>
</dbReference>
<dbReference type="GeneID" id="64058"/>
<dbReference type="KEGG" id="mmu:64058"/>
<dbReference type="UCSC" id="uc007emz.1">
    <property type="organism name" value="mouse"/>
</dbReference>
<dbReference type="AGR" id="MGI:1929938"/>
<dbReference type="CTD" id="64065"/>
<dbReference type="MGI" id="MGI:1929938">
    <property type="gene designation" value="Perp"/>
</dbReference>
<dbReference type="VEuPathDB" id="HostDB:ENSMUSG00000019851"/>
<dbReference type="eggNOG" id="KOG4671">
    <property type="taxonomic scope" value="Eukaryota"/>
</dbReference>
<dbReference type="GeneTree" id="ENSGT00530000063484"/>
<dbReference type="HOGENOM" id="CLU_120054_0_0_1"/>
<dbReference type="InParanoid" id="Q9JK95"/>
<dbReference type="OMA" id="RCGLACW"/>
<dbReference type="OrthoDB" id="8868135at2759"/>
<dbReference type="PhylomeDB" id="Q9JK95"/>
<dbReference type="TreeFam" id="TF312855"/>
<dbReference type="Reactome" id="R-MMU-6809371">
    <property type="pathway name" value="Formation of the cornified envelope"/>
</dbReference>
<dbReference type="BioGRID-ORCS" id="64058">
    <property type="hits" value="0 hits in 79 CRISPR screens"/>
</dbReference>
<dbReference type="ChiTaRS" id="Perp">
    <property type="organism name" value="mouse"/>
</dbReference>
<dbReference type="PRO" id="PR:Q9JK95"/>
<dbReference type="Proteomes" id="UP000000589">
    <property type="component" value="Chromosome 10"/>
</dbReference>
<dbReference type="RNAct" id="Q9JK95">
    <property type="molecule type" value="protein"/>
</dbReference>
<dbReference type="Bgee" id="ENSMUSG00000019851">
    <property type="expression patterns" value="Expressed in substantia propria of cornea and 251 other cell types or tissues"/>
</dbReference>
<dbReference type="GO" id="GO:0005737">
    <property type="term" value="C:cytoplasm"/>
    <property type="evidence" value="ECO:0000314"/>
    <property type="project" value="UniProtKB"/>
</dbReference>
<dbReference type="GO" id="GO:0030057">
    <property type="term" value="C:desmosome"/>
    <property type="evidence" value="ECO:0000314"/>
    <property type="project" value="UniProtKB"/>
</dbReference>
<dbReference type="GO" id="GO:0005794">
    <property type="term" value="C:Golgi apparatus"/>
    <property type="evidence" value="ECO:0000314"/>
    <property type="project" value="MGI"/>
</dbReference>
<dbReference type="GO" id="GO:0005739">
    <property type="term" value="C:mitochondrion"/>
    <property type="evidence" value="ECO:0000314"/>
    <property type="project" value="MGI"/>
</dbReference>
<dbReference type="GO" id="GO:0005886">
    <property type="term" value="C:plasma membrane"/>
    <property type="evidence" value="ECO:0000314"/>
    <property type="project" value="UniProtKB"/>
</dbReference>
<dbReference type="GO" id="GO:0097186">
    <property type="term" value="P:amelogenesis"/>
    <property type="evidence" value="ECO:0000315"/>
    <property type="project" value="MGI"/>
</dbReference>
<dbReference type="GO" id="GO:0002934">
    <property type="term" value="P:desmosome organization"/>
    <property type="evidence" value="ECO:0000315"/>
    <property type="project" value="MGI"/>
</dbReference>
<dbReference type="GO" id="GO:0034113">
    <property type="term" value="P:heterotypic cell-cell adhesion"/>
    <property type="evidence" value="ECO:0000315"/>
    <property type="project" value="MGI"/>
</dbReference>
<dbReference type="GO" id="GO:0072332">
    <property type="term" value="P:intrinsic apoptotic signaling pathway by p53 class mediator"/>
    <property type="evidence" value="ECO:0000314"/>
    <property type="project" value="MGI"/>
</dbReference>
<dbReference type="GO" id="GO:0060603">
    <property type="term" value="P:mammary gland duct morphogenesis"/>
    <property type="evidence" value="ECO:0000315"/>
    <property type="project" value="UniProtKB"/>
</dbReference>
<dbReference type="GO" id="GO:0007219">
    <property type="term" value="P:Notch signaling pathway"/>
    <property type="evidence" value="ECO:0000314"/>
    <property type="project" value="MGI"/>
</dbReference>
<dbReference type="GO" id="GO:0090023">
    <property type="term" value="P:positive regulation of neutrophil chemotaxis"/>
    <property type="evidence" value="ECO:0007669"/>
    <property type="project" value="Ensembl"/>
</dbReference>
<dbReference type="GO" id="GO:0045862">
    <property type="term" value="P:positive regulation of proteolysis"/>
    <property type="evidence" value="ECO:0007669"/>
    <property type="project" value="Ensembl"/>
</dbReference>
<dbReference type="GO" id="GO:0070234">
    <property type="term" value="P:positive regulation of T cell apoptotic process"/>
    <property type="evidence" value="ECO:0000315"/>
    <property type="project" value="UniProtKB"/>
</dbReference>
<dbReference type="GO" id="GO:0001894">
    <property type="term" value="P:tissue homeostasis"/>
    <property type="evidence" value="ECO:0000315"/>
    <property type="project" value="UniProtKB"/>
</dbReference>
<dbReference type="FunFam" id="1.20.140.150:FF:000014">
    <property type="entry name" value="p53 apoptosis effector related to PMP-22"/>
    <property type="match status" value="1"/>
</dbReference>
<dbReference type="Gene3D" id="1.20.140.150">
    <property type="match status" value="1"/>
</dbReference>
<dbReference type="InterPro" id="IPR015664">
    <property type="entry name" value="P53_induced"/>
</dbReference>
<dbReference type="InterPro" id="IPR004031">
    <property type="entry name" value="PMP22/EMP/MP20/Claudin"/>
</dbReference>
<dbReference type="PANTHER" id="PTHR14399:SF4">
    <property type="entry name" value="P53 APOPTOSIS EFFECTOR RELATED TO PMP-22"/>
    <property type="match status" value="1"/>
</dbReference>
<dbReference type="PANTHER" id="PTHR14399">
    <property type="entry name" value="P53-INDUCED PROTEIN RELATED"/>
    <property type="match status" value="1"/>
</dbReference>
<dbReference type="Pfam" id="PF00822">
    <property type="entry name" value="PMP22_Claudin"/>
    <property type="match status" value="1"/>
</dbReference>
<evidence type="ECO:0000250" key="1">
    <source>
        <dbReference type="UniProtKB" id="E9QHT9"/>
    </source>
</evidence>
<evidence type="ECO:0000250" key="2">
    <source>
        <dbReference type="UniProtKB" id="Q96FX8"/>
    </source>
</evidence>
<evidence type="ECO:0000255" key="3"/>
<evidence type="ECO:0000269" key="4">
    <source>
    </source>
</evidence>
<evidence type="ECO:0000269" key="5">
    <source>
    </source>
</evidence>
<evidence type="ECO:0000269" key="6">
    <source>
    </source>
</evidence>
<evidence type="ECO:0000269" key="7">
    <source>
    </source>
</evidence>
<evidence type="ECO:0000269" key="8">
    <source>
    </source>
</evidence>
<evidence type="ECO:0000269" key="9">
    <source>
    </source>
</evidence>
<evidence type="ECO:0000269" key="10">
    <source>
    </source>
</evidence>
<evidence type="ECO:0000269" key="11">
    <source>
    </source>
</evidence>
<evidence type="ECO:0000305" key="12"/>
<evidence type="ECO:0000312" key="13">
    <source>
        <dbReference type="MGI" id="MGI:1929938"/>
    </source>
</evidence>
<comment type="function">
    <text evidence="1 2 4 5 6 7 8 11">Component of intercellular desmosome junctions (PubMed:15797384). Plays a role in stratified epithelial integrity and cell-cell adhesion by promoting desmosome assembly (PubMed:15797384, PubMed:16485031). Thereby plays a role in barrier function of the skin against infection (PubMed:16485031). Plays a role in mammary epithelial tissue homeostasis and remodeling during and after pregnancy, potentially via its involvement in desmosome cell-cell junctions (PubMed:22515648). Required for tooth enamel development via facilitating desmosome-mediated ameloblast adhesion to the stratum intermedium during the transitional stage of amelogenesis (PubMed:21285247). May also play a role in downstream transcriptional regulation of other genes involved in amelogenesis such as AMBN, ENAM, MMP20 and KLK4 (PubMed:21285247). Plays a role as an effector in the TP53-dependent apoptotic pathway (PubMed:10733530). Positively regulates apoptosis in T-helper 17 (Th17) cell populations via caspase-dependent signaling (PubMed:29740445). Promotes neutrophil transepithelial migration in response to chemoattractants such as hepoxilin A3 (HXA3), N-Formylmethionyl-leucyl-phenylalanine (fMLP) and CXCL8/IL-8 (By similarity). May act as a positive regulator of endothelial cell apoptosis in response to blood flow-derived shear stress (By similarity).</text>
</comment>
<comment type="subcellular location">
    <subcellularLocation>
        <location evidence="5 8">Cell junction</location>
        <location evidence="5 8">Desmosome</location>
    </subcellularLocation>
    <subcellularLocation>
        <location evidence="5 7 8 9 10">Cell membrane</location>
        <topology evidence="3">Multi-pass membrane protein</topology>
    </subcellularLocation>
    <subcellularLocation>
        <location evidence="9 10">Cytoplasm</location>
    </subcellularLocation>
    <text evidence="2 5">Associated with desmosomes (PubMed:15797384). May translocate to the intestinal apical epithelial cell surface via sipA and sctB1/sipC-promoted exocytic translocation following infection by S. Typhimurium (By similarity).</text>
</comment>
<comment type="tissue specificity">
    <text evidence="4 5 7 8 9 10">Expressed in the stratified squamous skin epithelium of the skin and the tongue, but not in simple epithelia (at protein level) (PubMed:15797384). Expressed in the oral epithelium, tongue epithelium and skin (at protein level) (PubMed:21285247). More abundant in areas of lower flow stress in the inner curvature compared to the outer curvature regions of the aorta (at protein level) (PubMed:27834691). Expressed in luminal cells and myoepithelium cells of the mammary epithelium (at protein level) (PubMed:22515648). Expression increases during the early stages of pregnancy before decreasing before birth, expression continues to be weak during involution which mirrors decreased desmosome abundance and organization at these time points (at protein level) (PubMed:22515648). Expressed by epithelial cells at the mucosal surface in the proximal colon (at protein level) (PubMed:25486861). Expressed in apoptotic cells (PubMed:10733530).</text>
</comment>
<comment type="developmental stage">
    <text evidence="5 7">Expressed in developing skin during and after the stratification process from 9.5 to 15.5 dpc (at protein level) (PubMed:15797384). Expressed in the enamel organ at 14.5 dpc, then expressed in the enamel organ-derived such as the tissues stratum intermedium, stellate reticulum and the inner enamel epithelium at 16.5 dpc (at protein level) (PubMed:21285247). Expressed at the ameloblast-stratum intermedium interface as well as in the stratum intermedium itself at all stages of amelogenesis at postnatal day 7 (P7) (at protein level) (PubMed:21285247). Expressed in ectoderm of the developing branchial arches and limb buds from 9.5 to 10.5 dpc (PubMed:15797384). Expressed in epithelia of the oral mucosa and skin from the 16.5 to 18.5 dpc (PubMed:15797384).</text>
</comment>
<comment type="induction">
    <text evidence="4">Up-regulated by UV irradiation, doxorubicin (DOX) and Tp53 in embryonic fibroblasts.</text>
</comment>
<comment type="disruption phenotype">
    <text evidence="5 6 7 8">Knockout mice exhibit postnatal lethality and defects in stratified epithelia (PubMed:15797384). Decrease in expression of Dmkn, Krt83, Sost, Lama2 and the amelogenesis pathway proteins Ambn, Enam, Mmp20 and Klk4 in first lower molars at birth (PubMed:21285247). Upper and lower first molars show defective enamel formation and architectural abnormalities suggesting impairment of enamel matrix secretion and mineralization at postnatal day 2 (P2) (PubMed:21285247). Detachment of ameloblasts from the stratum intermedium surface resulting in ectopic localization between the ameloblast layer and the enamel matrix initially present at P2 remaining significant at the transitional stage of amelogenesis at P7 (PubMed:21285247). Reduced number of desmosome junctions along the ameloblast and stratum intermedium interface that abnormally show decreased electron density and reduced size at P2 (PubMed:21285247). Enamel defects are first noticeable in the lower incisors at P3, shown as a decreased enamel matrix density near the dentine surface-enamel junction (PubMed:21285247). Thinner dentin matrix and smaller teeth at P7 (PubMed:21285247). Lower incisors and first upper molars show irregular enamel matrix with a range of dense and clear regions suggesting a deficiency in matrix proteins or matrix resorption at P7 (PubMed:21285247). 5% of mice survive until adulthood on a mixed strain background (129/Sv;C57BL/6), they show a significantly decreased lifespan of 18 months, decreased weight, inflamed skin, disheveled fur and swollen feet and toes with blunted or broken nails (PubMed:16485031). Abnormally thick dorsal skin suggesting a hyperproliferative phenotype with additional infiltrating immune cells and tissue inflammation (PubMed:16485031). Abnormal plantar skin with extensive thickening of all the epidermal layers or hyperkeratosis with splitting between the cells. Many showed pododermatitis and a few showed severe bacterial infections in the jaw, ear or spinal cord (PubMed:16485031). There are gross abnormalities in the nails and hair, with a third of mice showing significant abnormalities in the architecture of the squamous epithelium with others showing disorganized basal layers with multiple small 'nailettes' developing rather than a coherent stratified structure and a loss of visible nail plate in some mice (PubMed:16485031). Mammary gland transplants show generally normal development of mammary gland morphology during and after pregnancy, however there is an increase in the number of abnormal foci identified as lymphocytic aggregates, particularly at bifurcation points of branching ducts (PubMed:22515648). Reduces abundance of desmosome proteins Dsp/Dp, Dsg1, Dsg2 and Dsc2 in mammary epithelial cells (PubMed:22515648).</text>
</comment>
<comment type="miscellaneous">
    <text evidence="11">May play a protective role in an experimental model of autoimmune encephalomyelitis that has similarities to human multiple sclerosis (PubMed:29740445). Perp is protective against demyelination, inflammatory infiltrates in the spinal cord tissues and increased levels of pro-inflammatory markers Tnf, Il6 and Il17a in the brain (PubMed:29740445). This is reflected in protection from early onset and decreased severity of experimental autoimmune encephalomyelitis (PubMed:29740445).</text>
</comment>
<comment type="similarity">
    <text evidence="12">Belongs to the TMEM47 family.</text>
</comment>
<protein>
    <recommendedName>
        <fullName evidence="2">p53 apoptosis effector related to PMP-22</fullName>
    </recommendedName>
    <alternativeName>
        <fullName evidence="2">Keratinocyte-associated protein 1</fullName>
        <shortName evidence="2">KCP-1</shortName>
    </alternativeName>
</protein>
<accession>Q9JK95</accession>
<accession>Q9JI77</accession>
<name>PERP_MOUSE</name>
<proteinExistence type="evidence at protein level"/>